<reference key="1">
    <citation type="journal article" date="2000" name="Nature">
        <title>Complete genome sequence of Pseudomonas aeruginosa PAO1, an opportunistic pathogen.</title>
        <authorList>
            <person name="Stover C.K."/>
            <person name="Pham X.-Q.T."/>
            <person name="Erwin A.L."/>
            <person name="Mizoguchi S.D."/>
            <person name="Warrener P."/>
            <person name="Hickey M.J."/>
            <person name="Brinkman F.S.L."/>
            <person name="Hufnagle W.O."/>
            <person name="Kowalik D.J."/>
            <person name="Lagrou M."/>
            <person name="Garber R.L."/>
            <person name="Goltry L."/>
            <person name="Tolentino E."/>
            <person name="Westbrock-Wadman S."/>
            <person name="Yuan Y."/>
            <person name="Brody L.L."/>
            <person name="Coulter S.N."/>
            <person name="Folger K.R."/>
            <person name="Kas A."/>
            <person name="Larbig K."/>
            <person name="Lim R.M."/>
            <person name="Smith K.A."/>
            <person name="Spencer D.H."/>
            <person name="Wong G.K.-S."/>
            <person name="Wu Z."/>
            <person name="Paulsen I.T."/>
            <person name="Reizer J."/>
            <person name="Saier M.H. Jr."/>
            <person name="Hancock R.E.W."/>
            <person name="Lory S."/>
            <person name="Olson M.V."/>
        </authorList>
    </citation>
    <scope>NUCLEOTIDE SEQUENCE [LARGE SCALE GENOMIC DNA]</scope>
    <source>
        <strain>ATCC 15692 / DSM 22644 / CIP 104116 / JCM 14847 / LMG 12228 / 1C / PRS 101 / PAO1</strain>
    </source>
</reference>
<reference evidence="4 5" key="2">
    <citation type="journal article" date="2014" name="J. Med. Chem.">
        <title>Differential modes of peptide binding onto replicative sliding clamps from various bacterial origins.</title>
        <authorList>
            <person name="Wolff P."/>
            <person name="Amal I."/>
            <person name="Olieric V."/>
            <person name="Chaloin O."/>
            <person name="Gygli G."/>
            <person name="Ennifar E."/>
            <person name="Lorber B."/>
            <person name="Guichard G."/>
            <person name="Wagner J."/>
            <person name="Dejaegere A."/>
            <person name="Burnouf D.Y."/>
        </authorList>
    </citation>
    <scope>X-RAY CRYSTALLOGRAPHY (1.80 ANGSTROMS) ALONE AND IN COMPLEX WITH PEPTIDE</scope>
    <scope>SUBUNIT</scope>
</reference>
<sequence>MHFTIQREALLKPLQLVAGVVERRQTLPVLSNVLLVVEGQQLSLTGTDLEVELVGRVVLEDAAEPGEITVPARKLMDICKSLPNDVLIDIRVEEQKLLVKAGRSRFTLSTLPANDFPTVEEGPGSLNFSIAQSKLRRLIDRTSFAMAQQDVRYYLNGMLLEVNGGTLRSVATDGHRLAMCSLDAQIPSQDRHQVIVPRKGILELARLLTEQDGEVGIVLGQHHIRATTGEFTFTSKLVDGKFPDYERVLPRGGDKLVVGDRQQLREAFSRTAILSNEKYRGIRLQLSNGLLKIQANNPEQEEAEEEVQVEYNGGNLEIGFNVSYLLDVLGVIGTEQVRFILSDSNSSALVHEADNDDSAYVVMPMRL</sequence>
<feature type="chain" id="PRO_0000105453" description="Beta sliding clamp">
    <location>
        <begin position="1"/>
        <end position="367"/>
    </location>
</feature>
<feature type="strand" evidence="6">
    <location>
        <begin position="2"/>
        <end position="6"/>
    </location>
</feature>
<feature type="helix" evidence="6">
    <location>
        <begin position="7"/>
        <end position="19"/>
    </location>
</feature>
<feature type="helix" evidence="6">
    <location>
        <begin position="28"/>
        <end position="31"/>
    </location>
</feature>
<feature type="strand" evidence="6">
    <location>
        <begin position="32"/>
        <end position="38"/>
    </location>
</feature>
<feature type="strand" evidence="6">
    <location>
        <begin position="41"/>
        <end position="47"/>
    </location>
</feature>
<feature type="strand" evidence="6">
    <location>
        <begin position="49"/>
        <end position="58"/>
    </location>
</feature>
<feature type="strand" evidence="6">
    <location>
        <begin position="66"/>
        <end position="71"/>
    </location>
</feature>
<feature type="helix" evidence="6">
    <location>
        <begin position="72"/>
        <end position="81"/>
    </location>
</feature>
<feature type="strand" evidence="6">
    <location>
        <begin position="87"/>
        <end position="93"/>
    </location>
</feature>
<feature type="strand" evidence="6">
    <location>
        <begin position="96"/>
        <end position="101"/>
    </location>
</feature>
<feature type="strand" evidence="6">
    <location>
        <begin position="104"/>
        <end position="109"/>
    </location>
</feature>
<feature type="helix" evidence="6">
    <location>
        <begin position="113"/>
        <end position="115"/>
    </location>
</feature>
<feature type="strand" evidence="6">
    <location>
        <begin position="124"/>
        <end position="131"/>
    </location>
</feature>
<feature type="helix" evidence="6">
    <location>
        <begin position="132"/>
        <end position="140"/>
    </location>
</feature>
<feature type="helix" evidence="6">
    <location>
        <begin position="143"/>
        <end position="145"/>
    </location>
</feature>
<feature type="helix" evidence="6">
    <location>
        <begin position="153"/>
        <end position="155"/>
    </location>
</feature>
<feature type="strand" evidence="6">
    <location>
        <begin position="156"/>
        <end position="163"/>
    </location>
</feature>
<feature type="strand" evidence="6">
    <location>
        <begin position="166"/>
        <end position="172"/>
    </location>
</feature>
<feature type="strand" evidence="6">
    <location>
        <begin position="174"/>
        <end position="183"/>
    </location>
</feature>
<feature type="strand" evidence="6">
    <location>
        <begin position="192"/>
        <end position="197"/>
    </location>
</feature>
<feature type="helix" evidence="6">
    <location>
        <begin position="198"/>
        <end position="207"/>
    </location>
</feature>
<feature type="strand" evidence="6">
    <location>
        <begin position="214"/>
        <end position="227"/>
    </location>
</feature>
<feature type="strand" evidence="6">
    <location>
        <begin position="229"/>
        <end position="236"/>
    </location>
</feature>
<feature type="helix" evidence="6">
    <location>
        <begin position="245"/>
        <end position="248"/>
    </location>
</feature>
<feature type="strand" evidence="6">
    <location>
        <begin position="255"/>
        <end position="260"/>
    </location>
</feature>
<feature type="helix" evidence="6">
    <location>
        <begin position="261"/>
        <end position="272"/>
    </location>
</feature>
<feature type="turn" evidence="6">
    <location>
        <begin position="277"/>
        <end position="279"/>
    </location>
</feature>
<feature type="strand" evidence="6">
    <location>
        <begin position="281"/>
        <end position="287"/>
    </location>
</feature>
<feature type="strand" evidence="6">
    <location>
        <begin position="290"/>
        <end position="296"/>
    </location>
</feature>
<feature type="strand" evidence="6">
    <location>
        <begin position="302"/>
        <end position="308"/>
    </location>
</feature>
<feature type="strand" evidence="6">
    <location>
        <begin position="316"/>
        <end position="321"/>
    </location>
</feature>
<feature type="helix" evidence="6">
    <location>
        <begin position="322"/>
        <end position="331"/>
    </location>
</feature>
<feature type="strand" evidence="6">
    <location>
        <begin position="334"/>
        <end position="341"/>
    </location>
</feature>
<feature type="strand" evidence="6">
    <location>
        <begin position="348"/>
        <end position="354"/>
    </location>
</feature>
<feature type="strand" evidence="6">
    <location>
        <begin position="356"/>
        <end position="362"/>
    </location>
</feature>
<organism>
    <name type="scientific">Pseudomonas aeruginosa (strain ATCC 15692 / DSM 22644 / CIP 104116 / JCM 14847 / LMG 12228 / 1C / PRS 101 / PAO1)</name>
    <dbReference type="NCBI Taxonomy" id="208964"/>
    <lineage>
        <taxon>Bacteria</taxon>
        <taxon>Pseudomonadati</taxon>
        <taxon>Pseudomonadota</taxon>
        <taxon>Gammaproteobacteria</taxon>
        <taxon>Pseudomonadales</taxon>
        <taxon>Pseudomonadaceae</taxon>
        <taxon>Pseudomonas</taxon>
    </lineage>
</organism>
<comment type="function">
    <text evidence="1">Confers DNA tethering and processivity to DNA polymerases and other proteins. Acts as a clamp, forming a ring around DNA (a reaction catalyzed by the clamp-loading complex) which diffuses in an ATP-independent manner freely and bidirectionally along dsDNA. Initially characterized for its ability to contact the catalytic subunit of DNA polymerase III (Pol III), a complex, multichain enzyme responsible for most of the replicative synthesis in bacteria; Pol III exhibits 3'-5' exonuclease proofreading activity. The beta chain is required for initiation of replication as well as for processivity of DNA replication.</text>
</comment>
<comment type="subunit">
    <text evidence="1 2">Forms a ring-shaped head-to-tail homodimer around DNA which binds and tethers DNA polymerases and other proteins to the DNA (PubMed:25170813). The DNA replisome complex has a single clamp-loading complex (3 tau and 1 each of delta, delta', psi and chi subunits) which binds 3 Pol III cores (1 core on the leading strand and 2 on the lagging strand) each with a beta sliding clamp dimer. Additional proteins in the replisome are other copies of gamma, psi and chi, Ssb, DNA helicase and RNA primase (By similarity).</text>
</comment>
<comment type="subcellular location">
    <subcellularLocation>
        <location evidence="1">Cytoplasm</location>
    </subcellularLocation>
</comment>
<comment type="similarity">
    <text evidence="3">Belongs to the beta sliding clamp family.</text>
</comment>
<evidence type="ECO:0000250" key="1">
    <source>
        <dbReference type="UniProtKB" id="P0A988"/>
    </source>
</evidence>
<evidence type="ECO:0000269" key="2">
    <source>
    </source>
</evidence>
<evidence type="ECO:0000305" key="3"/>
<evidence type="ECO:0007744" key="4">
    <source>
        <dbReference type="PDB" id="4TR8"/>
    </source>
</evidence>
<evidence type="ECO:0007744" key="5">
    <source>
        <dbReference type="PDB" id="4TSZ"/>
    </source>
</evidence>
<evidence type="ECO:0007829" key="6">
    <source>
        <dbReference type="PDB" id="4TR8"/>
    </source>
</evidence>
<protein>
    <recommendedName>
        <fullName>Beta sliding clamp</fullName>
        <shortName>Beta clamp</shortName>
        <shortName>Sliding clamp</shortName>
    </recommendedName>
    <alternativeName>
        <fullName>Beta-clamp processivity factor</fullName>
    </alternativeName>
    <alternativeName>
        <fullName>DNA polymerase III beta sliding clamp subunit</fullName>
    </alternativeName>
    <alternativeName>
        <fullName>DNA polymerase III subunit beta</fullName>
    </alternativeName>
</protein>
<dbReference type="EMBL" id="AE004091">
    <property type="protein sequence ID" value="AAG03392.1"/>
    <property type="molecule type" value="Genomic_DNA"/>
</dbReference>
<dbReference type="PIR" id="F83644">
    <property type="entry name" value="F83644"/>
</dbReference>
<dbReference type="RefSeq" id="NP_064722.1">
    <property type="nucleotide sequence ID" value="NC_002516.2"/>
</dbReference>
<dbReference type="RefSeq" id="WP_003097262.1">
    <property type="nucleotide sequence ID" value="NZ_QZGE01000012.1"/>
</dbReference>
<dbReference type="PDB" id="4TR8">
    <property type="method" value="X-ray"/>
    <property type="resolution" value="1.80 A"/>
    <property type="chains" value="A/B=1-367"/>
</dbReference>
<dbReference type="PDB" id="4TSZ">
    <property type="method" value="X-ray"/>
    <property type="resolution" value="2.00 A"/>
    <property type="chains" value="A/B/C/D/E/F/G/H/I/J/K/L/M/N/O/P=1-367"/>
</dbReference>
<dbReference type="PDB" id="6AMS">
    <property type="method" value="X-ray"/>
    <property type="resolution" value="2.39 A"/>
    <property type="chains" value="A/B/C/D=1-367"/>
</dbReference>
<dbReference type="PDB" id="6PTH">
    <property type="method" value="X-ray"/>
    <property type="resolution" value="3.05 A"/>
    <property type="chains" value="A=1-367"/>
</dbReference>
<dbReference type="PDBsum" id="4TR8"/>
<dbReference type="PDBsum" id="4TSZ"/>
<dbReference type="PDBsum" id="6AMS"/>
<dbReference type="PDBsum" id="6PTH"/>
<dbReference type="SMR" id="Q9I7C4"/>
<dbReference type="FunCoup" id="Q9I7C4">
    <property type="interactions" value="473"/>
</dbReference>
<dbReference type="STRING" id="208964.PA0002"/>
<dbReference type="PaxDb" id="208964-PA0002"/>
<dbReference type="DNASU" id="879244"/>
<dbReference type="GeneID" id="879244"/>
<dbReference type="KEGG" id="pae:PA0002"/>
<dbReference type="PATRIC" id="fig|208964.12.peg.2"/>
<dbReference type="PseudoCAP" id="PA0002"/>
<dbReference type="HOGENOM" id="CLU_038149_4_2_6"/>
<dbReference type="InParanoid" id="Q9I7C4"/>
<dbReference type="OrthoDB" id="8421503at2"/>
<dbReference type="PhylomeDB" id="Q9I7C4"/>
<dbReference type="BioCyc" id="PAER208964:G1FZ6-2-MONOMER"/>
<dbReference type="EvolutionaryTrace" id="Q9I7C4"/>
<dbReference type="Proteomes" id="UP000002438">
    <property type="component" value="Chromosome"/>
</dbReference>
<dbReference type="GO" id="GO:0005737">
    <property type="term" value="C:cytoplasm"/>
    <property type="evidence" value="ECO:0007669"/>
    <property type="project" value="UniProtKB-SubCell"/>
</dbReference>
<dbReference type="GO" id="GO:0009360">
    <property type="term" value="C:DNA polymerase III complex"/>
    <property type="evidence" value="ECO:0007669"/>
    <property type="project" value="InterPro"/>
</dbReference>
<dbReference type="GO" id="GO:0008408">
    <property type="term" value="F:3'-5' exonuclease activity"/>
    <property type="evidence" value="ECO:0007669"/>
    <property type="project" value="InterPro"/>
</dbReference>
<dbReference type="GO" id="GO:0003677">
    <property type="term" value="F:DNA binding"/>
    <property type="evidence" value="ECO:0007669"/>
    <property type="project" value="UniProtKB-KW"/>
</dbReference>
<dbReference type="GO" id="GO:0003887">
    <property type="term" value="F:DNA-directed DNA polymerase activity"/>
    <property type="evidence" value="ECO:0007669"/>
    <property type="project" value="UniProtKB-KW"/>
</dbReference>
<dbReference type="GO" id="GO:0006271">
    <property type="term" value="P:DNA strand elongation involved in DNA replication"/>
    <property type="evidence" value="ECO:0000250"/>
    <property type="project" value="PseudoCAP"/>
</dbReference>
<dbReference type="CDD" id="cd00140">
    <property type="entry name" value="beta_clamp"/>
    <property type="match status" value="1"/>
</dbReference>
<dbReference type="FunFam" id="3.10.150.10:FF:000001">
    <property type="entry name" value="Beta sliding clamp"/>
    <property type="match status" value="1"/>
</dbReference>
<dbReference type="FunFam" id="3.10.150.10:FF:000002">
    <property type="entry name" value="Beta sliding clamp"/>
    <property type="match status" value="1"/>
</dbReference>
<dbReference type="FunFam" id="3.10.150.10:FF:000003">
    <property type="entry name" value="Beta sliding clamp"/>
    <property type="match status" value="1"/>
</dbReference>
<dbReference type="Gene3D" id="3.10.150.10">
    <property type="entry name" value="DNA Polymerase III, subunit A, domain 2"/>
    <property type="match status" value="3"/>
</dbReference>
<dbReference type="InterPro" id="IPR046938">
    <property type="entry name" value="DNA_clamp_sf"/>
</dbReference>
<dbReference type="InterPro" id="IPR001001">
    <property type="entry name" value="DNA_polIII_beta"/>
</dbReference>
<dbReference type="InterPro" id="IPR022635">
    <property type="entry name" value="DNA_polIII_beta_C"/>
</dbReference>
<dbReference type="InterPro" id="IPR022637">
    <property type="entry name" value="DNA_polIII_beta_cen"/>
</dbReference>
<dbReference type="InterPro" id="IPR022634">
    <property type="entry name" value="DNA_polIII_beta_N"/>
</dbReference>
<dbReference type="NCBIfam" id="TIGR00663">
    <property type="entry name" value="dnan"/>
    <property type="match status" value="1"/>
</dbReference>
<dbReference type="PANTHER" id="PTHR30478:SF0">
    <property type="entry name" value="BETA SLIDING CLAMP"/>
    <property type="match status" value="1"/>
</dbReference>
<dbReference type="PANTHER" id="PTHR30478">
    <property type="entry name" value="DNA POLYMERASE III SUBUNIT BETA"/>
    <property type="match status" value="1"/>
</dbReference>
<dbReference type="Pfam" id="PF00712">
    <property type="entry name" value="DNA_pol3_beta"/>
    <property type="match status" value="1"/>
</dbReference>
<dbReference type="Pfam" id="PF02767">
    <property type="entry name" value="DNA_pol3_beta_2"/>
    <property type="match status" value="1"/>
</dbReference>
<dbReference type="Pfam" id="PF02768">
    <property type="entry name" value="DNA_pol3_beta_3"/>
    <property type="match status" value="1"/>
</dbReference>
<dbReference type="PIRSF" id="PIRSF000804">
    <property type="entry name" value="DNA_pol_III_b"/>
    <property type="match status" value="1"/>
</dbReference>
<dbReference type="SMART" id="SM00480">
    <property type="entry name" value="POL3Bc"/>
    <property type="match status" value="1"/>
</dbReference>
<dbReference type="SUPFAM" id="SSF55979">
    <property type="entry name" value="DNA clamp"/>
    <property type="match status" value="3"/>
</dbReference>
<gene>
    <name type="primary">dnaN</name>
    <name type="ordered locus">PA0002</name>
</gene>
<accession>Q9I7C4</accession>
<name>DPO3B_PSEAE</name>
<proteinExistence type="evidence at protein level"/>
<keyword id="KW-0002">3D-structure</keyword>
<keyword id="KW-0963">Cytoplasm</keyword>
<keyword id="KW-0235">DNA replication</keyword>
<keyword id="KW-0238">DNA-binding</keyword>
<keyword id="KW-0239">DNA-directed DNA polymerase</keyword>
<keyword id="KW-0548">Nucleotidyltransferase</keyword>
<keyword id="KW-1185">Reference proteome</keyword>
<keyword id="KW-0808">Transferase</keyword>